<keyword id="KW-0067">ATP-binding</keyword>
<keyword id="KW-0143">Chaperone</keyword>
<keyword id="KW-0175">Coiled coil</keyword>
<keyword id="KW-0963">Cytoplasm</keyword>
<keyword id="KW-0547">Nucleotide-binding</keyword>
<keyword id="KW-0677">Repeat</keyword>
<keyword id="KW-0346">Stress response</keyword>
<gene>
    <name type="primary">clpB</name>
    <name type="ordered locus">RF_0150/RF_0149</name>
</gene>
<dbReference type="EMBL" id="CP000053">
    <property type="protein sequence ID" value="AAY61000.1"/>
    <property type="status" value="ALT_INIT"/>
    <property type="molecule type" value="Genomic_DNA"/>
</dbReference>
<dbReference type="EMBL" id="CP000053">
    <property type="protein sequence ID" value="AAY61001.1"/>
    <property type="status" value="ALT_SEQ"/>
    <property type="molecule type" value="Genomic_DNA"/>
</dbReference>
<dbReference type="SMR" id="Q4UN57"/>
<dbReference type="STRING" id="315456.RF_0150"/>
<dbReference type="KEGG" id="rfe:RF_0149"/>
<dbReference type="KEGG" id="rfe:RF_0150"/>
<dbReference type="eggNOG" id="COG0542">
    <property type="taxonomic scope" value="Bacteria"/>
</dbReference>
<dbReference type="HOGENOM" id="CLU_150764_0_0_5"/>
<dbReference type="Proteomes" id="UP000008548">
    <property type="component" value="Chromosome"/>
</dbReference>
<dbReference type="GO" id="GO:0005737">
    <property type="term" value="C:cytoplasm"/>
    <property type="evidence" value="ECO:0007669"/>
    <property type="project" value="UniProtKB-SubCell"/>
</dbReference>
<dbReference type="GO" id="GO:0005524">
    <property type="term" value="F:ATP binding"/>
    <property type="evidence" value="ECO:0007669"/>
    <property type="project" value="UniProtKB-KW"/>
</dbReference>
<dbReference type="GO" id="GO:0016887">
    <property type="term" value="F:ATP hydrolysis activity"/>
    <property type="evidence" value="ECO:0007669"/>
    <property type="project" value="InterPro"/>
</dbReference>
<dbReference type="GO" id="GO:0034605">
    <property type="term" value="P:cellular response to heat"/>
    <property type="evidence" value="ECO:0007669"/>
    <property type="project" value="TreeGrafter"/>
</dbReference>
<dbReference type="GO" id="GO:0042026">
    <property type="term" value="P:protein refolding"/>
    <property type="evidence" value="ECO:0007669"/>
    <property type="project" value="InterPro"/>
</dbReference>
<dbReference type="CDD" id="cd00009">
    <property type="entry name" value="AAA"/>
    <property type="match status" value="1"/>
</dbReference>
<dbReference type="CDD" id="cd19499">
    <property type="entry name" value="RecA-like_ClpB_Hsp104-like"/>
    <property type="match status" value="1"/>
</dbReference>
<dbReference type="FunFam" id="3.40.50.300:FF:000120">
    <property type="entry name" value="ATP-dependent chaperone ClpB"/>
    <property type="match status" value="1"/>
</dbReference>
<dbReference type="FunFam" id="3.40.50.300:FF:000025">
    <property type="entry name" value="ATP-dependent Clp protease subunit"/>
    <property type="match status" value="1"/>
</dbReference>
<dbReference type="FunFam" id="3.40.50.300:FF:000010">
    <property type="entry name" value="Chaperone clpB 1, putative"/>
    <property type="match status" value="1"/>
</dbReference>
<dbReference type="Gene3D" id="1.10.8.60">
    <property type="match status" value="1"/>
</dbReference>
<dbReference type="Gene3D" id="1.10.1780.10">
    <property type="entry name" value="Clp, N-terminal domain"/>
    <property type="match status" value="1"/>
</dbReference>
<dbReference type="Gene3D" id="3.40.50.300">
    <property type="entry name" value="P-loop containing nucleotide triphosphate hydrolases"/>
    <property type="match status" value="3"/>
</dbReference>
<dbReference type="InterPro" id="IPR003593">
    <property type="entry name" value="AAA+_ATPase"/>
</dbReference>
<dbReference type="InterPro" id="IPR003959">
    <property type="entry name" value="ATPase_AAA_core"/>
</dbReference>
<dbReference type="InterPro" id="IPR017730">
    <property type="entry name" value="Chaperonin_ClpB"/>
</dbReference>
<dbReference type="InterPro" id="IPR019489">
    <property type="entry name" value="Clp_ATPase_C"/>
</dbReference>
<dbReference type="InterPro" id="IPR036628">
    <property type="entry name" value="Clp_N_dom_sf"/>
</dbReference>
<dbReference type="InterPro" id="IPR004176">
    <property type="entry name" value="Clp_R_dom"/>
</dbReference>
<dbReference type="InterPro" id="IPR001270">
    <property type="entry name" value="ClpA/B"/>
</dbReference>
<dbReference type="InterPro" id="IPR018368">
    <property type="entry name" value="ClpA/B_CS1"/>
</dbReference>
<dbReference type="InterPro" id="IPR028299">
    <property type="entry name" value="ClpA/B_CS2"/>
</dbReference>
<dbReference type="InterPro" id="IPR041546">
    <property type="entry name" value="ClpA/ClpB_AAA_lid"/>
</dbReference>
<dbReference type="InterPro" id="IPR050130">
    <property type="entry name" value="ClpA_ClpB"/>
</dbReference>
<dbReference type="InterPro" id="IPR027417">
    <property type="entry name" value="P-loop_NTPase"/>
</dbReference>
<dbReference type="NCBIfam" id="TIGR03346">
    <property type="entry name" value="chaperone_ClpB"/>
    <property type="match status" value="1"/>
</dbReference>
<dbReference type="PANTHER" id="PTHR11638">
    <property type="entry name" value="ATP-DEPENDENT CLP PROTEASE"/>
    <property type="match status" value="1"/>
</dbReference>
<dbReference type="PANTHER" id="PTHR11638:SF18">
    <property type="entry name" value="HEAT SHOCK PROTEIN 104"/>
    <property type="match status" value="1"/>
</dbReference>
<dbReference type="Pfam" id="PF00004">
    <property type="entry name" value="AAA"/>
    <property type="match status" value="1"/>
</dbReference>
<dbReference type="Pfam" id="PF07724">
    <property type="entry name" value="AAA_2"/>
    <property type="match status" value="1"/>
</dbReference>
<dbReference type="Pfam" id="PF17871">
    <property type="entry name" value="AAA_lid_9"/>
    <property type="match status" value="1"/>
</dbReference>
<dbReference type="Pfam" id="PF02861">
    <property type="entry name" value="Clp_N"/>
    <property type="match status" value="2"/>
</dbReference>
<dbReference type="Pfam" id="PF10431">
    <property type="entry name" value="ClpB_D2-small"/>
    <property type="match status" value="1"/>
</dbReference>
<dbReference type="PRINTS" id="PR00300">
    <property type="entry name" value="CLPPROTEASEA"/>
</dbReference>
<dbReference type="SMART" id="SM00382">
    <property type="entry name" value="AAA"/>
    <property type="match status" value="2"/>
</dbReference>
<dbReference type="SMART" id="SM01086">
    <property type="entry name" value="ClpB_D2-small"/>
    <property type="match status" value="1"/>
</dbReference>
<dbReference type="SUPFAM" id="SSF81923">
    <property type="entry name" value="Double Clp-N motif"/>
    <property type="match status" value="1"/>
</dbReference>
<dbReference type="SUPFAM" id="SSF52540">
    <property type="entry name" value="P-loop containing nucleoside triphosphate hydrolases"/>
    <property type="match status" value="2"/>
</dbReference>
<dbReference type="PROSITE" id="PS51903">
    <property type="entry name" value="CLP_R"/>
    <property type="match status" value="1"/>
</dbReference>
<dbReference type="PROSITE" id="PS00870">
    <property type="entry name" value="CLPAB_1"/>
    <property type="match status" value="1"/>
</dbReference>
<dbReference type="PROSITE" id="PS00871">
    <property type="entry name" value="CLPAB_2"/>
    <property type="match status" value="1"/>
</dbReference>
<proteinExistence type="inferred from homology"/>
<reference key="1">
    <citation type="journal article" date="2005" name="PLoS Biol.">
        <title>The genome sequence of Rickettsia felis identifies the first putative conjugative plasmid in an obligate intracellular parasite.</title>
        <authorList>
            <person name="Ogata H."/>
            <person name="Renesto P."/>
            <person name="Audic S."/>
            <person name="Robert C."/>
            <person name="Blanc G."/>
            <person name="Fournier P.-E."/>
            <person name="Parinello H."/>
            <person name="Claverie J.-M."/>
            <person name="Raoult D."/>
        </authorList>
    </citation>
    <scope>NUCLEOTIDE SEQUENCE [LARGE SCALE GENOMIC DNA]</scope>
    <source>
        <strain>ATCC VR-1525 / URRWXCal2</strain>
    </source>
</reference>
<protein>
    <recommendedName>
        <fullName>Chaperone protein ClpB</fullName>
    </recommendedName>
</protein>
<sequence length="858" mass="96055">MNIDKFTAHAKSVIASSQSIAAKNDHQQILPLHLLSSLLSEETGIIQTLINNTGGNINLLKDQVQLELNKIPKVQVEGGGQVYSSAEALKVLEKASSIAKDSGDSFVTIERIFEALTYGNTIAGKILTNNGINSKKLAAAILQFRKGKKADTESAENSYDALKKYGRDVTELAESGKLDPIIGRDEEIRRTVQVLSRRMKNNPVLIGEPGVGKTAIIEGLAQRIFSKDVPESLMNCRIIELDMGALIAGAKYRGEFEERLKAVLGEIKESSGEIILFIDELHLLVGTGKTDGAMDASNLLKPMLARGELHCIGATTLDEYRKYIEKDAALARRFQPVYVSEPTASDTISILRGIKEKYELHHAVRISDSAIVAAATLSNRYITDRYLPDKAIDLIDEACSRMKIELSSKPEELDELDRRIIQIKIELAALKKENDEHSKKKITHLTEELEKLESKSYDMKAKWQAEKSKLQQAQKLKEELERARIDLERAERDANLAKASELKYGIIPEIMKKIQEAESMDNKGLLKEIVSESDIASIISRITGIPIDTMLSSERERLLVMEQKLRESVIGQDEAIKGVSDAVRRSRAGIQDINRPLGSFLFLGPTGVGKTELTKALASFLFDDRNAILRIDMSEYMEKHAISRLIGAPPGYIGYDQGGVLTEAVRRRPYQVILFDEVEKAHPDIFNIMLQILDEGRLTDSQGITVDFKNTIIVLTSNLGAEILVNQKEDEDTYKVKDEVMEYVKAVFKPEFLNRLDEIILFHRLNRNNIHDIVKIQLESLKKILLAQNILLEFDESALNYLAEKGYDPSFGARPLKRLIQREIQNNLAKMILAGEISSGNTVKIAREKEELRIKIID</sequence>
<accession>Q4UN57</accession>
<accession>Q4UN58</accession>
<name>CLPB_RICFE</name>
<feature type="chain" id="PRO_0000281061" description="Chaperone protein ClpB">
    <location>
        <begin position="1"/>
        <end position="858"/>
    </location>
</feature>
<feature type="domain" description="Clp R" evidence="2">
    <location>
        <begin position="3"/>
        <end position="147"/>
    </location>
</feature>
<feature type="region of interest" description="Repeat 1" evidence="2">
    <location>
        <begin position="6"/>
        <end position="71"/>
    </location>
</feature>
<feature type="region of interest" description="Repeat 2" evidence="2">
    <location>
        <begin position="84"/>
        <end position="147"/>
    </location>
</feature>
<feature type="region of interest" description="NBD1" evidence="1">
    <location>
        <begin position="160"/>
        <end position="341"/>
    </location>
</feature>
<feature type="region of interest" description="Linker" evidence="1">
    <location>
        <begin position="342"/>
        <end position="544"/>
    </location>
</feature>
<feature type="region of interest" description="NBD2" evidence="1">
    <location>
        <begin position="554"/>
        <end position="764"/>
    </location>
</feature>
<feature type="region of interest" description="C-terminal" evidence="1">
    <location>
        <begin position="765"/>
        <end position="858"/>
    </location>
</feature>
<feature type="coiled-coil region" evidence="1">
    <location>
        <begin position="392"/>
        <end position="523"/>
    </location>
</feature>
<feature type="binding site" evidence="1">
    <location>
        <begin position="207"/>
        <end position="214"/>
    </location>
    <ligand>
        <name>ATP</name>
        <dbReference type="ChEBI" id="CHEBI:30616"/>
        <label>1</label>
    </ligand>
</feature>
<feature type="binding site" evidence="1">
    <location>
        <begin position="604"/>
        <end position="611"/>
    </location>
    <ligand>
        <name>ATP</name>
        <dbReference type="ChEBI" id="CHEBI:30616"/>
        <label>2</label>
    </ligand>
</feature>
<organism>
    <name type="scientific">Rickettsia felis (strain ATCC VR-1525 / URRWXCal2)</name>
    <name type="common">Rickettsia azadi</name>
    <dbReference type="NCBI Taxonomy" id="315456"/>
    <lineage>
        <taxon>Bacteria</taxon>
        <taxon>Pseudomonadati</taxon>
        <taxon>Pseudomonadota</taxon>
        <taxon>Alphaproteobacteria</taxon>
        <taxon>Rickettsiales</taxon>
        <taxon>Rickettsiaceae</taxon>
        <taxon>Rickettsieae</taxon>
        <taxon>Rickettsia</taxon>
        <taxon>spotted fever group</taxon>
    </lineage>
</organism>
<comment type="function">
    <text evidence="1">Part of a stress-induced multi-chaperone system, it is involved in the recovery of the cell from heat-induced damage, in cooperation with DnaK, DnaJ and GrpE. Acts before DnaK, in the processing of protein aggregates. Protein binding stimulates the ATPase activity; ATP hydrolysis unfolds the denatured protein aggregates, which probably helps expose new hydrophobic binding sites on the surface of ClpB-bound aggregates, contributing to the solubilization and refolding of denatured protein aggregates by DnaK (By similarity).</text>
</comment>
<comment type="subunit">
    <text evidence="1">Homohexamer. The oligomerization is ATP-dependent (By similarity).</text>
</comment>
<comment type="subcellular location">
    <subcellularLocation>
        <location evidence="3">Cytoplasm</location>
    </subcellularLocation>
</comment>
<comment type="domain">
    <text evidence="1">The Clp repeat (R) domain probably functions as a substrate-discriminating domain, recruiting aggregated proteins to the ClpB hexamer and/or stabilizing bound proteins. The NBD2 domain is responsible for oligomerization, whereas the NBD1 domain stabilizes the hexamer probably in an ATP-dependent manner. The movement of the coiled-coil domain is essential for ClpB ability to rescue proteins from an aggregated state, probably by pulling apart large aggregated proteins, which are bound between the coiled-coils motifs of adjacent ClpB subunits in the functional hexamer (By similarity).</text>
</comment>
<comment type="similarity">
    <text evidence="3">Belongs to the ClpA/ClpB family.</text>
</comment>
<comment type="sequence caution" evidence="3">
    <conflict type="erroneous initiation">
        <sequence resource="EMBL-CDS" id="AAY61000"/>
    </conflict>
</comment>
<comment type="sequence caution" evidence="3">
    <conflict type="erroneous termination">
        <sequence resource="EMBL-CDS" id="AAY61001"/>
    </conflict>
    <text>Truncated C-terminus.</text>
</comment>
<evidence type="ECO:0000250" key="1"/>
<evidence type="ECO:0000255" key="2">
    <source>
        <dbReference type="PROSITE-ProRule" id="PRU01251"/>
    </source>
</evidence>
<evidence type="ECO:0000305" key="3"/>